<organismHost>
    <name type="scientific">Homo sapiens</name>
    <name type="common">Human</name>
    <dbReference type="NCBI Taxonomy" id="9606"/>
</organismHost>
<sequence length="607" mass="67193">MAGFPGKEAGPPGGWRKCQEDESPENERHENFYAEIDDFAPSVLTPTGSDSGAGEEDDDGLYQVPTHWPPLMAPTGLSGERVPCRTQAAVTSNTGNSPGSRHTSCPFTLPRGAQPPAPAHQKPTAPTPKPRSRECGPSKTPDPFSWFRKTSCTEGGADSTSRSFMYQKGFEEGLAGLGLDDKSDCESEDESNFRRPSSHSALKQKNGGKGKPSGLFEHLAAHGREFSKLSKHAAQLKRLSGSVMNVLNLDDAQDTRQAKAQRKESMRVPIVTHLTNHVPVIKPACSLFLEGAPGVGKTTMLNHLKAVFGDLTIVVPEPMRYWTHVYENAIKAMHKNVTRARHGREDTSAEVLACQMKFTTPFRVLASRKRSLLVTESGARSVAPLDCWILHDRHLLSASVVFPLMLLRSQLLSYSDFIQVLATFTADPGDTIVWMKLNVEENMRRLKKRGRKHESGLDAGYLKSVNDAYHAVYCAWLLTQYFAPEDIVKVCAGLTTITTVCHQSHTPIIRSGVAEKLYKNSIFSVLKEVIQPFRADAVLLEVCLAFTRTLAYLQFVLVDLSEFQDDLPGCWTEIYMQALKNPAIRSQFFDWAGLSKVISDFERGNRD</sequence>
<gene>
    <name evidence="1" type="primary">TK</name>
    <name type="ORF">BXLF1</name>
</gene>
<accession>P03177</accession>
<accession>Q777B9</accession>
<keyword id="KW-0067">ATP-binding</keyword>
<keyword id="KW-0237">DNA synthesis</keyword>
<keyword id="KW-0244">Early protein</keyword>
<keyword id="KW-1048">Host nucleus</keyword>
<keyword id="KW-0418">Kinase</keyword>
<keyword id="KW-0547">Nucleotide-binding</keyword>
<keyword id="KW-1185">Reference proteome</keyword>
<keyword id="KW-0808">Transferase</keyword>
<keyword id="KW-0946">Virion</keyword>
<keyword id="KW-0920">Virion tegument</keyword>
<name>KITH_EBVB9</name>
<comment type="function">
    <text evidence="1">Catalyzes the transfer of the gamma-phospho group of ATP to thymidine to generate dTMP in the salvage pathway of pyrimidine synthesis. The dTMP serves as a substrate for DNA polymerase during viral DNA replication. Allows the virus to be reactivated and to grow in non-proliferative cells lacking a high concentration of phosphorylated nucleic acid precursors.</text>
</comment>
<comment type="catalytic activity">
    <reaction evidence="1">
        <text>thymidine + ATP = dTMP + ADP + H(+)</text>
        <dbReference type="Rhea" id="RHEA:19129"/>
        <dbReference type="ChEBI" id="CHEBI:15378"/>
        <dbReference type="ChEBI" id="CHEBI:17748"/>
        <dbReference type="ChEBI" id="CHEBI:30616"/>
        <dbReference type="ChEBI" id="CHEBI:63528"/>
        <dbReference type="ChEBI" id="CHEBI:456216"/>
        <dbReference type="EC" id="2.7.1.21"/>
    </reaction>
</comment>
<comment type="subunit">
    <text evidence="1">Homodimer.</text>
</comment>
<comment type="subcellular location">
    <subcellularLocation>
        <location>Virion tegument</location>
    </subcellularLocation>
    <subcellularLocation>
        <location>Host nucleus</location>
    </subcellularLocation>
    <text>Localizes to the centrosome and more precisely to the periphery of the centriole, tightly encircling the tubulin-rich centrioles.</text>
</comment>
<comment type="miscellaneous">
    <text>Phosphorylates and thereby activates certain drugs like acyclovir (ACV), valacyclovir, and famciclovir to a toxic form, that leads to successful suppression of the infection, while the uninfected cell does not have this ability because it lacks TK.</text>
</comment>
<comment type="similarity">
    <text evidence="1">Belongs to the herpesviridae thymidine kinase family.</text>
</comment>
<reference key="1">
    <citation type="journal article" date="1983" name="Mol. Biol. Med.">
        <title>Sequence analysis of the 17,166 base-pair EcoRI fragment C of B95-8 Epstein-Barr virus.</title>
        <authorList>
            <person name="Bankier A.T."/>
            <person name="Deininger P.L."/>
            <person name="Farrell P.J."/>
            <person name="Barrell B.G."/>
        </authorList>
    </citation>
    <scope>NUCLEOTIDE SEQUENCE [GENOMIC DNA]</scope>
</reference>
<reference key="2">
    <citation type="journal article" date="1984" name="Nature">
        <title>DNA sequence and expression of the B95-8 Epstein-Barr virus genome.</title>
        <authorList>
            <person name="Baer R."/>
            <person name="Bankier A.T."/>
            <person name="Biggin M.D."/>
            <person name="Deininger P.L."/>
            <person name="Farrell P.J."/>
            <person name="Gibson T.J."/>
            <person name="Hatfull G."/>
            <person name="Hudson G.S."/>
            <person name="Satchwell S.C."/>
            <person name="Seguin C."/>
            <person name="Tuffnell P.S."/>
            <person name="Barrell B.G."/>
        </authorList>
    </citation>
    <scope>NUCLEOTIDE SEQUENCE [LARGE SCALE GENOMIC DNA]</scope>
</reference>
<reference key="3">
    <citation type="journal article" date="2003" name="Virology">
        <title>Updated Epstein-Barr virus (EBV) DNA sequence and analysis of a promoter for the BART (CST, BARF0) RNAs of EBV.</title>
        <authorList>
            <person name="de Jesus O."/>
            <person name="Smith P.R."/>
            <person name="Spender L.C."/>
            <person name="Elgueta Karstegl C."/>
            <person name="Niller H.H."/>
            <person name="Huang D."/>
            <person name="Farrell P.J."/>
        </authorList>
    </citation>
    <scope>GENOME REANNOTATION</scope>
</reference>
<reference key="4">
    <citation type="journal article" date="1986" name="EMBO J.">
        <title>Identification of an Epstein-Barr virus-coded thymidine kinase.</title>
        <authorList>
            <person name="Littler E."/>
            <person name="Zeuthen J."/>
            <person name="McBride A.A."/>
            <person name="Soerensen E.T."/>
            <person name="Powell K.L."/>
            <person name="Walsh-Arrand J.E."/>
            <person name="Arrand J.R."/>
        </authorList>
    </citation>
    <scope>IDENTIFICATION OF PROTEIN</scope>
</reference>
<reference key="5">
    <citation type="journal article" date="2004" name="Proc. Natl. Acad. Sci. U.S.A.">
        <title>Proteins of purified Epstein-Barr virus.</title>
        <authorList>
            <person name="Johannsen E."/>
            <person name="Luftig M."/>
            <person name="Chase M.R."/>
            <person name="Weicksel S."/>
            <person name="Cahir-McFarland E."/>
            <person name="Illanes D."/>
            <person name="Sarracino D."/>
            <person name="Kieff E."/>
        </authorList>
    </citation>
    <scope>SUBCELLULAR LOCATION</scope>
</reference>
<reference key="6">
    <citation type="journal article" date="2007" name="J. Virol.">
        <title>Epstein-Barr virus thymidine kinase is a centrosomal resident precisely localized to the periphery of centrioles.</title>
        <authorList>
            <person name="Gill M.B."/>
            <person name="Kutok J.L."/>
            <person name="Fingeroth J.D."/>
        </authorList>
    </citation>
    <scope>SUBCELLULAR LOCATION</scope>
</reference>
<feature type="chain" id="PRO_0000175059" description="Thymidine kinase">
    <location>
        <begin position="1"/>
        <end position="607"/>
    </location>
</feature>
<feature type="region of interest" description="Disordered" evidence="2">
    <location>
        <begin position="1"/>
        <end position="160"/>
    </location>
</feature>
<feature type="region of interest" description="Disordered" evidence="2">
    <location>
        <begin position="180"/>
        <end position="215"/>
    </location>
</feature>
<feature type="compositionally biased region" description="Basic and acidic residues" evidence="2">
    <location>
        <begin position="17"/>
        <end position="32"/>
    </location>
</feature>
<feature type="compositionally biased region" description="Polar residues" evidence="2">
    <location>
        <begin position="88"/>
        <end position="106"/>
    </location>
</feature>
<feature type="compositionally biased region" description="Polar residues" evidence="2">
    <location>
        <begin position="148"/>
        <end position="160"/>
    </location>
</feature>
<feature type="compositionally biased region" description="Polar residues" evidence="2">
    <location>
        <begin position="194"/>
        <end position="203"/>
    </location>
</feature>
<feature type="active site" description="Proton acceptor" evidence="1">
    <location>
        <position position="317"/>
    </location>
</feature>
<feature type="binding site" evidence="1">
    <location>
        <begin position="291"/>
        <end position="298"/>
    </location>
    <ligand>
        <name>ATP</name>
        <dbReference type="ChEBI" id="CHEBI:30616"/>
    </ligand>
</feature>
<feature type="binding site" evidence="1">
    <location>
        <position position="355"/>
    </location>
    <ligand>
        <name>substrate</name>
    </ligand>
</feature>
<feature type="binding site" evidence="1">
    <location>
        <position position="445"/>
    </location>
    <ligand>
        <name>ATP</name>
        <dbReference type="ChEBI" id="CHEBI:30616"/>
    </ligand>
</feature>
<feature type="binding site" evidence="1">
    <location>
        <position position="451"/>
    </location>
    <ligand>
        <name>substrate</name>
    </ligand>
</feature>
<protein>
    <recommendedName>
        <fullName evidence="1">Thymidine kinase</fullName>
        <ecNumber evidence="1">2.7.1.21</ecNumber>
    </recommendedName>
</protein>
<proteinExistence type="inferred from homology"/>
<evidence type="ECO:0000255" key="1">
    <source>
        <dbReference type="HAMAP-Rule" id="MF_04029"/>
    </source>
</evidence>
<evidence type="ECO:0000256" key="2">
    <source>
        <dbReference type="SAM" id="MobiDB-lite"/>
    </source>
</evidence>
<organism>
    <name type="scientific">Epstein-Barr virus (strain B95-8)</name>
    <name type="common">HHV-4</name>
    <name type="synonym">Human herpesvirus 4</name>
    <dbReference type="NCBI Taxonomy" id="10377"/>
    <lineage>
        <taxon>Viruses</taxon>
        <taxon>Duplodnaviria</taxon>
        <taxon>Heunggongvirae</taxon>
        <taxon>Peploviricota</taxon>
        <taxon>Herviviricetes</taxon>
        <taxon>Herpesvirales</taxon>
        <taxon>Orthoherpesviridae</taxon>
        <taxon>Gammaherpesvirinae</taxon>
        <taxon>Lymphocryptovirus</taxon>
        <taxon>Lymphocryptovirus humangamma4</taxon>
        <taxon>Epstein-Barr virus (strain GD1)</taxon>
    </lineage>
</organism>
<dbReference type="EC" id="2.7.1.21" evidence="1"/>
<dbReference type="EMBL" id="V01555">
    <property type="protein sequence ID" value="CAA24799.1"/>
    <property type="molecule type" value="Genomic_DNA"/>
</dbReference>
<dbReference type="EMBL" id="AJ507799">
    <property type="protein sequence ID" value="CAD53451.1"/>
    <property type="molecule type" value="Genomic_DNA"/>
</dbReference>
<dbReference type="PIR" id="A00615">
    <property type="entry name" value="KIBETE"/>
</dbReference>
<dbReference type="RefSeq" id="YP_401701.1">
    <property type="nucleotide sequence ID" value="NC_007605.1"/>
</dbReference>
<dbReference type="SMR" id="P03177"/>
<dbReference type="IntAct" id="P03177">
    <property type="interactions" value="43"/>
</dbReference>
<dbReference type="MINT" id="P03177"/>
<dbReference type="DNASU" id="3783741"/>
<dbReference type="GeneID" id="3783741"/>
<dbReference type="KEGG" id="vg:3783741"/>
<dbReference type="SABIO-RK" id="P03177"/>
<dbReference type="Proteomes" id="UP000153037">
    <property type="component" value="Segment"/>
</dbReference>
<dbReference type="GO" id="GO:0042025">
    <property type="term" value="C:host cell nucleus"/>
    <property type="evidence" value="ECO:0007669"/>
    <property type="project" value="UniProtKB-SubCell"/>
</dbReference>
<dbReference type="GO" id="GO:0019033">
    <property type="term" value="C:viral tegument"/>
    <property type="evidence" value="ECO:0007669"/>
    <property type="project" value="UniProtKB-SubCell"/>
</dbReference>
<dbReference type="GO" id="GO:0005524">
    <property type="term" value="F:ATP binding"/>
    <property type="evidence" value="ECO:0007669"/>
    <property type="project" value="UniProtKB-KW"/>
</dbReference>
<dbReference type="GO" id="GO:0004797">
    <property type="term" value="F:thymidine kinase activity"/>
    <property type="evidence" value="ECO:0007669"/>
    <property type="project" value="UniProtKB-EC"/>
</dbReference>
<dbReference type="GO" id="GO:0071897">
    <property type="term" value="P:DNA biosynthetic process"/>
    <property type="evidence" value="ECO:0007669"/>
    <property type="project" value="UniProtKB-KW"/>
</dbReference>
<dbReference type="GO" id="GO:0006230">
    <property type="term" value="P:TMP biosynthetic process"/>
    <property type="evidence" value="ECO:0007669"/>
    <property type="project" value="InterPro"/>
</dbReference>
<dbReference type="Gene3D" id="3.40.50.300">
    <property type="entry name" value="P-loop containing nucleotide triphosphate hydrolases"/>
    <property type="match status" value="1"/>
</dbReference>
<dbReference type="HAMAP" id="MF_04029">
    <property type="entry name" value="HSV_KITH"/>
    <property type="match status" value="1"/>
</dbReference>
<dbReference type="InterPro" id="IPR050566">
    <property type="entry name" value="Deoxyribonucleoside_kinase"/>
</dbReference>
<dbReference type="InterPro" id="IPR001889">
    <property type="entry name" value="Herpes_TK"/>
</dbReference>
<dbReference type="InterPro" id="IPR013672">
    <property type="entry name" value="Herpes_TK_C"/>
</dbReference>
<dbReference type="InterPro" id="IPR027417">
    <property type="entry name" value="P-loop_NTPase"/>
</dbReference>
<dbReference type="PANTHER" id="PTHR10513:SF35">
    <property type="entry name" value="DEOXYADENOSINE KINASE"/>
    <property type="match status" value="1"/>
</dbReference>
<dbReference type="PANTHER" id="PTHR10513">
    <property type="entry name" value="DEOXYNUCLEOSIDE KINASE"/>
    <property type="match status" value="1"/>
</dbReference>
<dbReference type="Pfam" id="PF00693">
    <property type="entry name" value="Herpes_TK"/>
    <property type="match status" value="1"/>
</dbReference>
<dbReference type="Pfam" id="PF08465">
    <property type="entry name" value="Herpes_TK_C"/>
    <property type="match status" value="1"/>
</dbReference>
<dbReference type="SUPFAM" id="SSF52540">
    <property type="entry name" value="P-loop containing nucleoside triphosphate hydrolases"/>
    <property type="match status" value="1"/>
</dbReference>